<accession>Q8WCK9</accession>
<dbReference type="EMBL" id="AF395461">
    <property type="protein sequence ID" value="AAL65882.1"/>
    <property type="molecule type" value="Genomic_DNA"/>
</dbReference>
<dbReference type="SMR" id="Q8WCK9"/>
<dbReference type="GO" id="GO:0005743">
    <property type="term" value="C:mitochondrial inner membrane"/>
    <property type="evidence" value="ECO:0007669"/>
    <property type="project" value="UniProtKB-SubCell"/>
</dbReference>
<dbReference type="GO" id="GO:0045275">
    <property type="term" value="C:respiratory chain complex III"/>
    <property type="evidence" value="ECO:0007669"/>
    <property type="project" value="InterPro"/>
</dbReference>
<dbReference type="GO" id="GO:0046872">
    <property type="term" value="F:metal ion binding"/>
    <property type="evidence" value="ECO:0007669"/>
    <property type="project" value="UniProtKB-KW"/>
</dbReference>
<dbReference type="GO" id="GO:0008121">
    <property type="term" value="F:ubiquinol-cytochrome-c reductase activity"/>
    <property type="evidence" value="ECO:0007669"/>
    <property type="project" value="InterPro"/>
</dbReference>
<dbReference type="GO" id="GO:0006122">
    <property type="term" value="P:mitochondrial electron transport, ubiquinol to cytochrome c"/>
    <property type="evidence" value="ECO:0007669"/>
    <property type="project" value="TreeGrafter"/>
</dbReference>
<dbReference type="CDD" id="cd00290">
    <property type="entry name" value="cytochrome_b_C"/>
    <property type="match status" value="1"/>
</dbReference>
<dbReference type="CDD" id="cd00284">
    <property type="entry name" value="Cytochrome_b_N"/>
    <property type="match status" value="1"/>
</dbReference>
<dbReference type="FunFam" id="1.20.810.10:FF:000002">
    <property type="entry name" value="Cytochrome b"/>
    <property type="match status" value="1"/>
</dbReference>
<dbReference type="Gene3D" id="1.20.810.10">
    <property type="entry name" value="Cytochrome Bc1 Complex, Chain C"/>
    <property type="match status" value="1"/>
</dbReference>
<dbReference type="InterPro" id="IPR005798">
    <property type="entry name" value="Cyt_b/b6_C"/>
</dbReference>
<dbReference type="InterPro" id="IPR036150">
    <property type="entry name" value="Cyt_b/b6_C_sf"/>
</dbReference>
<dbReference type="InterPro" id="IPR005797">
    <property type="entry name" value="Cyt_b/b6_N"/>
</dbReference>
<dbReference type="InterPro" id="IPR027387">
    <property type="entry name" value="Cytb/b6-like_sf"/>
</dbReference>
<dbReference type="InterPro" id="IPR030689">
    <property type="entry name" value="Cytochrome_b"/>
</dbReference>
<dbReference type="InterPro" id="IPR048260">
    <property type="entry name" value="Cytochrome_b_C_euk/bac"/>
</dbReference>
<dbReference type="InterPro" id="IPR048259">
    <property type="entry name" value="Cytochrome_b_N_euk/bac"/>
</dbReference>
<dbReference type="InterPro" id="IPR016174">
    <property type="entry name" value="Di-haem_cyt_TM"/>
</dbReference>
<dbReference type="PANTHER" id="PTHR19271">
    <property type="entry name" value="CYTOCHROME B"/>
    <property type="match status" value="1"/>
</dbReference>
<dbReference type="PANTHER" id="PTHR19271:SF16">
    <property type="entry name" value="CYTOCHROME B"/>
    <property type="match status" value="1"/>
</dbReference>
<dbReference type="Pfam" id="PF00032">
    <property type="entry name" value="Cytochrom_B_C"/>
    <property type="match status" value="1"/>
</dbReference>
<dbReference type="Pfam" id="PF00033">
    <property type="entry name" value="Cytochrome_B"/>
    <property type="match status" value="1"/>
</dbReference>
<dbReference type="PIRSF" id="PIRSF038885">
    <property type="entry name" value="COB"/>
    <property type="match status" value="1"/>
</dbReference>
<dbReference type="SUPFAM" id="SSF81648">
    <property type="entry name" value="a domain/subunit of cytochrome bc1 complex (Ubiquinol-cytochrome c reductase)"/>
    <property type="match status" value="1"/>
</dbReference>
<dbReference type="SUPFAM" id="SSF81342">
    <property type="entry name" value="Transmembrane di-heme cytochromes"/>
    <property type="match status" value="1"/>
</dbReference>
<dbReference type="PROSITE" id="PS51003">
    <property type="entry name" value="CYTB_CTER"/>
    <property type="match status" value="1"/>
</dbReference>
<dbReference type="PROSITE" id="PS51002">
    <property type="entry name" value="CYTB_NTER"/>
    <property type="match status" value="1"/>
</dbReference>
<comment type="function">
    <text evidence="2">Component of the ubiquinol-cytochrome c reductase complex (complex III or cytochrome b-c1 complex) that is part of the mitochondrial respiratory chain. The b-c1 complex mediates electron transfer from ubiquinol to cytochrome c. Contributes to the generation of a proton gradient across the mitochondrial membrane that is then used for ATP synthesis.</text>
</comment>
<comment type="cofactor">
    <cofactor evidence="2">
        <name>heme b</name>
        <dbReference type="ChEBI" id="CHEBI:60344"/>
    </cofactor>
    <text evidence="2">Binds 2 heme b groups non-covalently.</text>
</comment>
<comment type="subunit">
    <text evidence="2">The cytochrome bc1 complex contains 11 subunits: 3 respiratory subunits (MT-CYB, CYC1 and UQCRFS1), 2 core proteins (UQCRC1 and UQCRC2) and 6 low-molecular weight proteins (UQCRH/QCR6, UQCRB/QCR7, UQCRQ/QCR8, UQCR10/QCR9, UQCR11/QCR10 and a cleavage product of UQCRFS1). This cytochrome bc1 complex then forms a dimer.</text>
</comment>
<comment type="subcellular location">
    <subcellularLocation>
        <location evidence="2">Mitochondrion inner membrane</location>
        <topology evidence="2">Multi-pass membrane protein</topology>
    </subcellularLocation>
</comment>
<comment type="miscellaneous">
    <text evidence="1">Heme 1 (or BL or b562) is low-potential and absorbs at about 562 nm, and heme 2 (or BH or b566) is high-potential and absorbs at about 566 nm.</text>
</comment>
<comment type="similarity">
    <text evidence="3 4">Belongs to the cytochrome b family.</text>
</comment>
<comment type="caution">
    <text evidence="2">The full-length protein contains only eight transmembrane helices, not nine as predicted by bioinformatics tools.</text>
</comment>
<protein>
    <recommendedName>
        <fullName>Cytochrome b</fullName>
    </recommendedName>
    <alternativeName>
        <fullName>Complex III subunit 3</fullName>
    </alternativeName>
    <alternativeName>
        <fullName>Complex III subunit III</fullName>
    </alternativeName>
    <alternativeName>
        <fullName>Cytochrome b-c1 complex subunit 3</fullName>
    </alternativeName>
    <alternativeName>
        <fullName>Ubiquinol-cytochrome-c reductase complex cytochrome b subunit</fullName>
    </alternativeName>
</protein>
<geneLocation type="mitochondrion"/>
<gene>
    <name type="primary">MT-CYB</name>
    <name type="synonym">COB</name>
    <name type="synonym">CYTB</name>
    <name type="synonym">MTCYB</name>
</gene>
<feature type="chain" id="PRO_0000060674" description="Cytochrome b">
    <location>
        <begin position="1"/>
        <end position="379"/>
    </location>
</feature>
<feature type="transmembrane region" description="Helical" evidence="2">
    <location>
        <begin position="33"/>
        <end position="53"/>
    </location>
</feature>
<feature type="transmembrane region" description="Helical" evidence="2">
    <location>
        <begin position="77"/>
        <end position="98"/>
    </location>
</feature>
<feature type="transmembrane region" description="Helical" evidence="2">
    <location>
        <begin position="113"/>
        <end position="133"/>
    </location>
</feature>
<feature type="transmembrane region" description="Helical" evidence="2">
    <location>
        <begin position="178"/>
        <end position="198"/>
    </location>
</feature>
<feature type="transmembrane region" description="Helical" evidence="2">
    <location>
        <begin position="226"/>
        <end position="246"/>
    </location>
</feature>
<feature type="transmembrane region" description="Helical" evidence="2">
    <location>
        <begin position="288"/>
        <end position="308"/>
    </location>
</feature>
<feature type="transmembrane region" description="Helical" evidence="2">
    <location>
        <begin position="320"/>
        <end position="340"/>
    </location>
</feature>
<feature type="transmembrane region" description="Helical" evidence="2">
    <location>
        <begin position="347"/>
        <end position="367"/>
    </location>
</feature>
<feature type="binding site" description="axial binding residue" evidence="2">
    <location>
        <position position="83"/>
    </location>
    <ligand>
        <name>heme b</name>
        <dbReference type="ChEBI" id="CHEBI:60344"/>
        <label>b562</label>
    </ligand>
    <ligandPart>
        <name>Fe</name>
        <dbReference type="ChEBI" id="CHEBI:18248"/>
    </ligandPart>
</feature>
<feature type="binding site" description="axial binding residue" evidence="2">
    <location>
        <position position="97"/>
    </location>
    <ligand>
        <name>heme b</name>
        <dbReference type="ChEBI" id="CHEBI:60344"/>
        <label>b566</label>
    </ligand>
    <ligandPart>
        <name>Fe</name>
        <dbReference type="ChEBI" id="CHEBI:18248"/>
    </ligandPart>
</feature>
<feature type="binding site" description="axial binding residue" evidence="2">
    <location>
        <position position="182"/>
    </location>
    <ligand>
        <name>heme b</name>
        <dbReference type="ChEBI" id="CHEBI:60344"/>
        <label>b562</label>
    </ligand>
    <ligandPart>
        <name>Fe</name>
        <dbReference type="ChEBI" id="CHEBI:18248"/>
    </ligandPart>
</feature>
<feature type="binding site" description="axial binding residue" evidence="2">
    <location>
        <position position="196"/>
    </location>
    <ligand>
        <name>heme b</name>
        <dbReference type="ChEBI" id="CHEBI:60344"/>
        <label>b566</label>
    </ligand>
    <ligandPart>
        <name>Fe</name>
        <dbReference type="ChEBI" id="CHEBI:18248"/>
    </ligandPart>
</feature>
<feature type="binding site" evidence="2">
    <location>
        <position position="201"/>
    </location>
    <ligand>
        <name>a ubiquinone</name>
        <dbReference type="ChEBI" id="CHEBI:16389"/>
    </ligand>
</feature>
<sequence>MTNIRKTHPLMKIINSSFIDLPAPSNISSWWNFGSLLGICLVIQILTGLFLAMHYTSDTVTAFSSVTHICRDVNYGWLIRYLHANGASMFFICLFLHVGRGLYYGSYMFMETWNIGVLLLFAVMATAFMGYVLPWGQMSFWGATVITNLLSAIPYIGSDLVQWIWGGFSVDKATLTRFFAFHFILPFVIAALAGVHLLFLHETGSNNPSGLSSDADKIPFHPYYTIKDILGALILILVLTCLVLFSPDLLGDPDNYTPANPLNTPPHIKPEWYFLFAYAILRSIPNKLGGVLALVLSILILAFIPLLHTSKQRSMMFRPFSQCLFWVLVADLLTLTWIGGQPVEHPFIIIGQLASILYFLLLLVIMPITSLFENNLLKW</sequence>
<keyword id="KW-0249">Electron transport</keyword>
<keyword id="KW-0349">Heme</keyword>
<keyword id="KW-0408">Iron</keyword>
<keyword id="KW-0472">Membrane</keyword>
<keyword id="KW-0479">Metal-binding</keyword>
<keyword id="KW-0496">Mitochondrion</keyword>
<keyword id="KW-0999">Mitochondrion inner membrane</keyword>
<keyword id="KW-0679">Respiratory chain</keyword>
<keyword id="KW-0812">Transmembrane</keyword>
<keyword id="KW-1133">Transmembrane helix</keyword>
<keyword id="KW-0813">Transport</keyword>
<keyword id="KW-0830">Ubiquinone</keyword>
<organism>
    <name type="scientific">Blarina brevicauda</name>
    <name type="common">Northern short-tailed shrew</name>
    <dbReference type="NCBI Taxonomy" id="9387"/>
    <lineage>
        <taxon>Eukaryota</taxon>
        <taxon>Metazoa</taxon>
        <taxon>Chordata</taxon>
        <taxon>Craniata</taxon>
        <taxon>Vertebrata</taxon>
        <taxon>Euteleostomi</taxon>
        <taxon>Mammalia</taxon>
        <taxon>Eutheria</taxon>
        <taxon>Laurasiatheria</taxon>
        <taxon>Eulipotyphla</taxon>
        <taxon>Soricidae</taxon>
        <taxon>Soricinae</taxon>
        <taxon>Blarina</taxon>
    </lineage>
</organism>
<evidence type="ECO:0000250" key="1"/>
<evidence type="ECO:0000250" key="2">
    <source>
        <dbReference type="UniProtKB" id="P00157"/>
    </source>
</evidence>
<evidence type="ECO:0000255" key="3">
    <source>
        <dbReference type="PROSITE-ProRule" id="PRU00967"/>
    </source>
</evidence>
<evidence type="ECO:0000255" key="4">
    <source>
        <dbReference type="PROSITE-ProRule" id="PRU00968"/>
    </source>
</evidence>
<proteinExistence type="inferred from homology"/>
<reference key="1">
    <citation type="journal article" date="2002" name="Mol. Phylogenet. Evol.">
        <title>Molecular phylogeny of short-tailed shrews, Blarina (Insectivora; Soricidae).</title>
        <authorList>
            <person name="Brant S.V."/>
            <person name="Orti G."/>
        </authorList>
    </citation>
    <scope>NUCLEOTIDE SEQUENCE [GENOMIC DNA]</scope>
    <source>
        <strain>Isolate 1042br</strain>
    </source>
</reference>
<name>CYB_BLABR</name>